<organism>
    <name type="scientific">Pectobacterium carotovorum subsp. carotovorum (strain PC1)</name>
    <dbReference type="NCBI Taxonomy" id="561230"/>
    <lineage>
        <taxon>Bacteria</taxon>
        <taxon>Pseudomonadati</taxon>
        <taxon>Pseudomonadota</taxon>
        <taxon>Gammaproteobacteria</taxon>
        <taxon>Enterobacterales</taxon>
        <taxon>Pectobacteriaceae</taxon>
        <taxon>Pectobacterium</taxon>
    </lineage>
</organism>
<sequence>MPVITLPDGSQRHYDHAVSPLDVALDIGPGLAKACIAGRVNGELVDASDKIDTDAQLAIITAKDEAGLEIIRHSCAHLLGHAIKQLWPDTKMAIGPVIDNGFYYDVDIDRTLTQEDIELLEKRMHELADTDYDVIKKKVSWQEARDAFAARGETYKMAILDENISRDDRPGLYHHEEYIDMCRGPHVPNMRFCHHFKLQKTSGAYWRGDSKNKMLQRIYGTAWADKKQLASYLQRLEEAAKRDHRKIGKQLDLYHMQEEAPGMVFWHNDGWTIFRELEAFVRMKLKSYQYQEVKGPFMMDRVMWEKTGHWENYKEAMFTTSSENREYCIKPMNCPGHVQIFNQGLKSYRDLPLRMAEFGSCHRNEPSGSLHGLMRVRGFTQDDAHIFCTEEQVRDEVNSCIKMVYDMYSTFGFEKIVVKLSTRPEKRIGSDEMWDRAEADLAAALTENNIEFDYQPGEGAFYGPKIEFTLHDCLDRAWQCGTVQLDFSLPGRLNASYVGESNERQVPVMIHRAILGSMERFIGILTEEFAGFFPTWLAPVQVVIMNITDTQSDYVNELTRKLQEAGIRVKADLRNEKIGFKIREHTLRRVPYMLVCGDKEVEAGKVAVRTRRGKDLGSLDVSEVISKLQQEIRSRSLHQLEE</sequence>
<proteinExistence type="inferred from homology"/>
<gene>
    <name evidence="1" type="primary">thrS</name>
    <name type="ordered locus">PC1_1888</name>
</gene>
<keyword id="KW-0030">Aminoacyl-tRNA synthetase</keyword>
<keyword id="KW-0067">ATP-binding</keyword>
<keyword id="KW-0963">Cytoplasm</keyword>
<keyword id="KW-0436">Ligase</keyword>
<keyword id="KW-0479">Metal-binding</keyword>
<keyword id="KW-0547">Nucleotide-binding</keyword>
<keyword id="KW-0648">Protein biosynthesis</keyword>
<keyword id="KW-0694">RNA-binding</keyword>
<keyword id="KW-0820">tRNA-binding</keyword>
<keyword id="KW-0862">Zinc</keyword>
<accession>C6DFY6</accession>
<evidence type="ECO:0000255" key="1">
    <source>
        <dbReference type="HAMAP-Rule" id="MF_00184"/>
    </source>
</evidence>
<evidence type="ECO:0000255" key="2">
    <source>
        <dbReference type="PROSITE-ProRule" id="PRU01228"/>
    </source>
</evidence>
<reference key="1">
    <citation type="submission" date="2009-07" db="EMBL/GenBank/DDBJ databases">
        <title>Complete sequence of Pectobacterium carotovorum subsp. carotovorum PC1.</title>
        <authorList>
            <consortium name="US DOE Joint Genome Institute"/>
            <person name="Lucas S."/>
            <person name="Copeland A."/>
            <person name="Lapidus A."/>
            <person name="Glavina del Rio T."/>
            <person name="Tice H."/>
            <person name="Bruce D."/>
            <person name="Goodwin L."/>
            <person name="Pitluck S."/>
            <person name="Munk A.C."/>
            <person name="Brettin T."/>
            <person name="Detter J.C."/>
            <person name="Han C."/>
            <person name="Tapia R."/>
            <person name="Larimer F."/>
            <person name="Land M."/>
            <person name="Hauser L."/>
            <person name="Kyrpides N."/>
            <person name="Mikhailova N."/>
            <person name="Balakrishnan V."/>
            <person name="Glasner J."/>
            <person name="Perna N.T."/>
        </authorList>
    </citation>
    <scope>NUCLEOTIDE SEQUENCE [LARGE SCALE GENOMIC DNA]</scope>
    <source>
        <strain>PC1</strain>
    </source>
</reference>
<protein>
    <recommendedName>
        <fullName evidence="1">Threonine--tRNA ligase</fullName>
        <ecNumber evidence="1">6.1.1.3</ecNumber>
    </recommendedName>
    <alternativeName>
        <fullName evidence="1">Threonyl-tRNA synthetase</fullName>
        <shortName evidence="1">ThrRS</shortName>
    </alternativeName>
</protein>
<dbReference type="EC" id="6.1.1.3" evidence="1"/>
<dbReference type="EMBL" id="CP001657">
    <property type="protein sequence ID" value="ACT12929.1"/>
    <property type="molecule type" value="Genomic_DNA"/>
</dbReference>
<dbReference type="RefSeq" id="WP_015840131.1">
    <property type="nucleotide sequence ID" value="NC_012917.1"/>
</dbReference>
<dbReference type="SMR" id="C6DFY6"/>
<dbReference type="STRING" id="561230.PC1_1888"/>
<dbReference type="GeneID" id="67793886"/>
<dbReference type="KEGG" id="pct:PC1_1888"/>
<dbReference type="eggNOG" id="COG0441">
    <property type="taxonomic scope" value="Bacteria"/>
</dbReference>
<dbReference type="HOGENOM" id="CLU_008554_0_1_6"/>
<dbReference type="OrthoDB" id="9802304at2"/>
<dbReference type="Proteomes" id="UP000002736">
    <property type="component" value="Chromosome"/>
</dbReference>
<dbReference type="GO" id="GO:0005829">
    <property type="term" value="C:cytosol"/>
    <property type="evidence" value="ECO:0007669"/>
    <property type="project" value="TreeGrafter"/>
</dbReference>
<dbReference type="GO" id="GO:0005524">
    <property type="term" value="F:ATP binding"/>
    <property type="evidence" value="ECO:0007669"/>
    <property type="project" value="UniProtKB-UniRule"/>
</dbReference>
<dbReference type="GO" id="GO:0046872">
    <property type="term" value="F:metal ion binding"/>
    <property type="evidence" value="ECO:0007669"/>
    <property type="project" value="UniProtKB-KW"/>
</dbReference>
<dbReference type="GO" id="GO:0004829">
    <property type="term" value="F:threonine-tRNA ligase activity"/>
    <property type="evidence" value="ECO:0007669"/>
    <property type="project" value="UniProtKB-UniRule"/>
</dbReference>
<dbReference type="GO" id="GO:0000049">
    <property type="term" value="F:tRNA binding"/>
    <property type="evidence" value="ECO:0007669"/>
    <property type="project" value="UniProtKB-KW"/>
</dbReference>
<dbReference type="GO" id="GO:0006435">
    <property type="term" value="P:threonyl-tRNA aminoacylation"/>
    <property type="evidence" value="ECO:0007669"/>
    <property type="project" value="UniProtKB-UniRule"/>
</dbReference>
<dbReference type="CDD" id="cd01667">
    <property type="entry name" value="TGS_ThrRS"/>
    <property type="match status" value="1"/>
</dbReference>
<dbReference type="CDD" id="cd00860">
    <property type="entry name" value="ThrRS_anticodon"/>
    <property type="match status" value="1"/>
</dbReference>
<dbReference type="CDD" id="cd00771">
    <property type="entry name" value="ThrRS_core"/>
    <property type="match status" value="1"/>
</dbReference>
<dbReference type="FunFam" id="3.10.20.30:FF:000005">
    <property type="entry name" value="Threonine--tRNA ligase"/>
    <property type="match status" value="1"/>
</dbReference>
<dbReference type="FunFam" id="3.30.54.20:FF:000002">
    <property type="entry name" value="Threonine--tRNA ligase"/>
    <property type="match status" value="1"/>
</dbReference>
<dbReference type="FunFam" id="3.30.930.10:FF:000002">
    <property type="entry name" value="Threonine--tRNA ligase"/>
    <property type="match status" value="1"/>
</dbReference>
<dbReference type="FunFam" id="3.40.50.800:FF:000001">
    <property type="entry name" value="Threonine--tRNA ligase"/>
    <property type="match status" value="1"/>
</dbReference>
<dbReference type="FunFam" id="3.30.980.10:FF:000005">
    <property type="entry name" value="Threonyl-tRNA synthetase, mitochondrial"/>
    <property type="match status" value="1"/>
</dbReference>
<dbReference type="Gene3D" id="3.10.20.30">
    <property type="match status" value="1"/>
</dbReference>
<dbReference type="Gene3D" id="3.30.54.20">
    <property type="match status" value="1"/>
</dbReference>
<dbReference type="Gene3D" id="3.40.50.800">
    <property type="entry name" value="Anticodon-binding domain"/>
    <property type="match status" value="1"/>
</dbReference>
<dbReference type="Gene3D" id="3.30.930.10">
    <property type="entry name" value="Bira Bifunctional Protein, Domain 2"/>
    <property type="match status" value="1"/>
</dbReference>
<dbReference type="Gene3D" id="3.30.980.10">
    <property type="entry name" value="Threonyl-trna Synthetase, Chain A, domain 2"/>
    <property type="match status" value="1"/>
</dbReference>
<dbReference type="HAMAP" id="MF_00184">
    <property type="entry name" value="Thr_tRNA_synth"/>
    <property type="match status" value="1"/>
</dbReference>
<dbReference type="InterPro" id="IPR002314">
    <property type="entry name" value="aa-tRNA-synt_IIb"/>
</dbReference>
<dbReference type="InterPro" id="IPR006195">
    <property type="entry name" value="aa-tRNA-synth_II"/>
</dbReference>
<dbReference type="InterPro" id="IPR045864">
    <property type="entry name" value="aa-tRNA-synth_II/BPL/LPL"/>
</dbReference>
<dbReference type="InterPro" id="IPR004154">
    <property type="entry name" value="Anticodon-bd"/>
</dbReference>
<dbReference type="InterPro" id="IPR036621">
    <property type="entry name" value="Anticodon-bd_dom_sf"/>
</dbReference>
<dbReference type="InterPro" id="IPR012675">
    <property type="entry name" value="Beta-grasp_dom_sf"/>
</dbReference>
<dbReference type="InterPro" id="IPR004095">
    <property type="entry name" value="TGS"/>
</dbReference>
<dbReference type="InterPro" id="IPR012676">
    <property type="entry name" value="TGS-like"/>
</dbReference>
<dbReference type="InterPro" id="IPR002320">
    <property type="entry name" value="Thr-tRNA-ligase_IIa"/>
</dbReference>
<dbReference type="InterPro" id="IPR018163">
    <property type="entry name" value="Thr/Ala-tRNA-synth_IIc_edit"/>
</dbReference>
<dbReference type="InterPro" id="IPR047246">
    <property type="entry name" value="ThrRS_anticodon"/>
</dbReference>
<dbReference type="InterPro" id="IPR033728">
    <property type="entry name" value="ThrRS_core"/>
</dbReference>
<dbReference type="InterPro" id="IPR012947">
    <property type="entry name" value="tRNA_SAD"/>
</dbReference>
<dbReference type="NCBIfam" id="TIGR00418">
    <property type="entry name" value="thrS"/>
    <property type="match status" value="1"/>
</dbReference>
<dbReference type="PANTHER" id="PTHR11451:SF44">
    <property type="entry name" value="THREONINE--TRNA LIGASE, CHLOROPLASTIC_MITOCHONDRIAL 2"/>
    <property type="match status" value="1"/>
</dbReference>
<dbReference type="PANTHER" id="PTHR11451">
    <property type="entry name" value="THREONINE-TRNA LIGASE"/>
    <property type="match status" value="1"/>
</dbReference>
<dbReference type="Pfam" id="PF03129">
    <property type="entry name" value="HGTP_anticodon"/>
    <property type="match status" value="1"/>
</dbReference>
<dbReference type="Pfam" id="PF02824">
    <property type="entry name" value="TGS"/>
    <property type="match status" value="1"/>
</dbReference>
<dbReference type="Pfam" id="PF00587">
    <property type="entry name" value="tRNA-synt_2b"/>
    <property type="match status" value="1"/>
</dbReference>
<dbReference type="Pfam" id="PF07973">
    <property type="entry name" value="tRNA_SAD"/>
    <property type="match status" value="1"/>
</dbReference>
<dbReference type="PRINTS" id="PR01047">
    <property type="entry name" value="TRNASYNTHTHR"/>
</dbReference>
<dbReference type="SMART" id="SM00863">
    <property type="entry name" value="tRNA_SAD"/>
    <property type="match status" value="1"/>
</dbReference>
<dbReference type="SUPFAM" id="SSF52954">
    <property type="entry name" value="Class II aaRS ABD-related"/>
    <property type="match status" value="1"/>
</dbReference>
<dbReference type="SUPFAM" id="SSF55681">
    <property type="entry name" value="Class II aaRS and biotin synthetases"/>
    <property type="match status" value="1"/>
</dbReference>
<dbReference type="SUPFAM" id="SSF81271">
    <property type="entry name" value="TGS-like"/>
    <property type="match status" value="1"/>
</dbReference>
<dbReference type="SUPFAM" id="SSF55186">
    <property type="entry name" value="ThrRS/AlaRS common domain"/>
    <property type="match status" value="1"/>
</dbReference>
<dbReference type="PROSITE" id="PS50862">
    <property type="entry name" value="AA_TRNA_LIGASE_II"/>
    <property type="match status" value="1"/>
</dbReference>
<dbReference type="PROSITE" id="PS51880">
    <property type="entry name" value="TGS"/>
    <property type="match status" value="1"/>
</dbReference>
<comment type="function">
    <text evidence="1">Catalyzes the attachment of threonine to tRNA(Thr) in a two-step reaction: L-threonine is first activated by ATP to form Thr-AMP and then transferred to the acceptor end of tRNA(Thr). Also edits incorrectly charged L-seryl-tRNA(Thr).</text>
</comment>
<comment type="catalytic activity">
    <reaction evidence="1">
        <text>tRNA(Thr) + L-threonine + ATP = L-threonyl-tRNA(Thr) + AMP + diphosphate + H(+)</text>
        <dbReference type="Rhea" id="RHEA:24624"/>
        <dbReference type="Rhea" id="RHEA-COMP:9670"/>
        <dbReference type="Rhea" id="RHEA-COMP:9704"/>
        <dbReference type="ChEBI" id="CHEBI:15378"/>
        <dbReference type="ChEBI" id="CHEBI:30616"/>
        <dbReference type="ChEBI" id="CHEBI:33019"/>
        <dbReference type="ChEBI" id="CHEBI:57926"/>
        <dbReference type="ChEBI" id="CHEBI:78442"/>
        <dbReference type="ChEBI" id="CHEBI:78534"/>
        <dbReference type="ChEBI" id="CHEBI:456215"/>
        <dbReference type="EC" id="6.1.1.3"/>
    </reaction>
</comment>
<comment type="cofactor">
    <cofactor evidence="1">
        <name>Zn(2+)</name>
        <dbReference type="ChEBI" id="CHEBI:29105"/>
    </cofactor>
    <text evidence="1">Binds 1 zinc ion per subunit.</text>
</comment>
<comment type="subunit">
    <text evidence="1">Homodimer.</text>
</comment>
<comment type="subcellular location">
    <subcellularLocation>
        <location evidence="1">Cytoplasm</location>
    </subcellularLocation>
</comment>
<comment type="similarity">
    <text evidence="1">Belongs to the class-II aminoacyl-tRNA synthetase family.</text>
</comment>
<name>SYT_PECCP</name>
<feature type="chain" id="PRO_1000203914" description="Threonine--tRNA ligase">
    <location>
        <begin position="1"/>
        <end position="642"/>
    </location>
</feature>
<feature type="domain" description="TGS" evidence="2">
    <location>
        <begin position="1"/>
        <end position="61"/>
    </location>
</feature>
<feature type="region of interest" description="Catalytic" evidence="1">
    <location>
        <begin position="243"/>
        <end position="534"/>
    </location>
</feature>
<feature type="binding site" evidence="1">
    <location>
        <position position="334"/>
    </location>
    <ligand>
        <name>Zn(2+)</name>
        <dbReference type="ChEBI" id="CHEBI:29105"/>
    </ligand>
</feature>
<feature type="binding site" evidence="1">
    <location>
        <position position="385"/>
    </location>
    <ligand>
        <name>Zn(2+)</name>
        <dbReference type="ChEBI" id="CHEBI:29105"/>
    </ligand>
</feature>
<feature type="binding site" evidence="1">
    <location>
        <position position="511"/>
    </location>
    <ligand>
        <name>Zn(2+)</name>
        <dbReference type="ChEBI" id="CHEBI:29105"/>
    </ligand>
</feature>